<sequence>MSYDASAIRVLKGLEGVRHRPAMYIGGTGVEGYHHLFKEILDNAVDEALAGYATEILVRLNEDGSLTVEDNGRGIPVDLMPEEGKPAVEVIYTTLHSGGKFEQGAYKVSGGLHGVGASVVNALSEWTVVEVFREGKHHRIAFSRGEVTEPLRVVGEAPRGKTGTRVTFKPDPEIFGNLRFDPSKIRARLREVAYLVAGLKLVFQDRQHGKEEVFLDKGGVASFAKALAEGEDLLYEKPFLIRGTHGEVEVEVGFLHTQGYNAEILTYANMIPTRDGGTHLTAFKSAYSRALNQYAKKAGLNKEKGPQPTGDDLLEGLYAVVSVKLPNPQFEGQTKGKLLNPEAGTAVGQVVYERLLEILEENPRIAKAVYEKALRAAQAREAARKARELVRRQNPLESDELPGKLADCQTENPEEAELFIVEGDSAGGSAKQGRDRRFQAILPLRGKILNVEKAGLSKALKNAEVRAMVSAIGVGIGGDGEAHFDLEGLRYHKIIIMTDADVDGSHIRTLLLTFFYRYMRPLIERGHVYIAQPPLYRLQVGKKVEYLYSDEELQARLKELEGKHYEVQRFKGLGEMNPEQLWETTMNPEKRVLKRVELQDALEASELFEKLMGQEVAPRREFIEEHARYAELDI</sequence>
<protein>
    <recommendedName>
        <fullName evidence="1">DNA gyrase subunit B</fullName>
        <ecNumber evidence="1">5.6.2.2</ecNumber>
    </recommendedName>
</protein>
<dbReference type="EC" id="5.6.2.2" evidence="1"/>
<dbReference type="EMBL" id="AF167433">
    <property type="protein sequence ID" value="AAF89615.1"/>
    <property type="molecule type" value="Genomic_DNA"/>
</dbReference>
<dbReference type="EMBL" id="AP008226">
    <property type="protein sequence ID" value="BAD71409.1"/>
    <property type="molecule type" value="Genomic_DNA"/>
</dbReference>
<dbReference type="RefSeq" id="WP_011228788.1">
    <property type="nucleotide sequence ID" value="NC_006461.1"/>
</dbReference>
<dbReference type="RefSeq" id="YP_144852.1">
    <property type="nucleotide sequence ID" value="NC_006461.1"/>
</dbReference>
<dbReference type="PDB" id="1KIJ">
    <property type="method" value="X-ray"/>
    <property type="resolution" value="2.30 A"/>
    <property type="chains" value="A/B=1-390"/>
</dbReference>
<dbReference type="PDB" id="6ENH">
    <property type="method" value="X-ray"/>
    <property type="resolution" value="1.94 A"/>
    <property type="chains" value="A=1-390"/>
</dbReference>
<dbReference type="PDBsum" id="1KIJ"/>
<dbReference type="PDBsum" id="6ENH"/>
<dbReference type="SMR" id="Q5SHZ4"/>
<dbReference type="DrugBank" id="DB01942">
    <property type="generic name" value="Formic acid"/>
</dbReference>
<dbReference type="EnsemblBacteria" id="BAD71409">
    <property type="protein sequence ID" value="BAD71409"/>
    <property type="gene ID" value="BAD71409"/>
</dbReference>
<dbReference type="GeneID" id="3170041"/>
<dbReference type="KEGG" id="ttj:TTHA1586"/>
<dbReference type="PATRIC" id="fig|300852.9.peg.1556"/>
<dbReference type="eggNOG" id="COG0187">
    <property type="taxonomic scope" value="Bacteria"/>
</dbReference>
<dbReference type="HOGENOM" id="CLU_006146_4_1_0"/>
<dbReference type="PhylomeDB" id="Q5SHZ4"/>
<dbReference type="EvolutionaryTrace" id="Q5SHZ4"/>
<dbReference type="Proteomes" id="UP000000532">
    <property type="component" value="Chromosome"/>
</dbReference>
<dbReference type="GO" id="GO:0005694">
    <property type="term" value="C:chromosome"/>
    <property type="evidence" value="ECO:0007669"/>
    <property type="project" value="InterPro"/>
</dbReference>
<dbReference type="GO" id="GO:0005737">
    <property type="term" value="C:cytoplasm"/>
    <property type="evidence" value="ECO:0007669"/>
    <property type="project" value="UniProtKB-SubCell"/>
</dbReference>
<dbReference type="GO" id="GO:0005524">
    <property type="term" value="F:ATP binding"/>
    <property type="evidence" value="ECO:0007669"/>
    <property type="project" value="UniProtKB-UniRule"/>
</dbReference>
<dbReference type="GO" id="GO:0003677">
    <property type="term" value="F:DNA binding"/>
    <property type="evidence" value="ECO:0007669"/>
    <property type="project" value="UniProtKB-KW"/>
</dbReference>
<dbReference type="GO" id="GO:0034335">
    <property type="term" value="F:DNA negative supercoiling activity"/>
    <property type="evidence" value="ECO:0000314"/>
    <property type="project" value="UniProtKB"/>
</dbReference>
<dbReference type="GO" id="GO:0046872">
    <property type="term" value="F:metal ion binding"/>
    <property type="evidence" value="ECO:0007669"/>
    <property type="project" value="UniProtKB-KW"/>
</dbReference>
<dbReference type="GO" id="GO:0006265">
    <property type="term" value="P:DNA topological change"/>
    <property type="evidence" value="ECO:0007669"/>
    <property type="project" value="UniProtKB-UniRule"/>
</dbReference>
<dbReference type="GO" id="GO:0006261">
    <property type="term" value="P:DNA-templated DNA replication"/>
    <property type="evidence" value="ECO:0007669"/>
    <property type="project" value="UniProtKB-UniRule"/>
</dbReference>
<dbReference type="CDD" id="cd16928">
    <property type="entry name" value="HATPase_GyrB-like"/>
    <property type="match status" value="1"/>
</dbReference>
<dbReference type="CDD" id="cd00822">
    <property type="entry name" value="TopoII_Trans_DNA_gyrase"/>
    <property type="match status" value="1"/>
</dbReference>
<dbReference type="CDD" id="cd03366">
    <property type="entry name" value="TOPRIM_TopoIIA_GyrB"/>
    <property type="match status" value="1"/>
</dbReference>
<dbReference type="FunFam" id="3.30.230.10:FF:000005">
    <property type="entry name" value="DNA gyrase subunit B"/>
    <property type="match status" value="1"/>
</dbReference>
<dbReference type="FunFam" id="3.30.565.10:FF:000002">
    <property type="entry name" value="DNA gyrase subunit B"/>
    <property type="match status" value="1"/>
</dbReference>
<dbReference type="FunFam" id="3.40.50.670:FF:000002">
    <property type="entry name" value="DNA gyrase subunit B"/>
    <property type="match status" value="1"/>
</dbReference>
<dbReference type="Gene3D" id="3.30.230.10">
    <property type="match status" value="1"/>
</dbReference>
<dbReference type="Gene3D" id="3.40.50.670">
    <property type="match status" value="1"/>
</dbReference>
<dbReference type="Gene3D" id="3.30.565.10">
    <property type="entry name" value="Histidine kinase-like ATPase, C-terminal domain"/>
    <property type="match status" value="1"/>
</dbReference>
<dbReference type="HAMAP" id="MF_01898">
    <property type="entry name" value="GyrB"/>
    <property type="match status" value="1"/>
</dbReference>
<dbReference type="InterPro" id="IPR002288">
    <property type="entry name" value="DNA_gyrase_B_C"/>
</dbReference>
<dbReference type="InterPro" id="IPR011557">
    <property type="entry name" value="GyrB"/>
</dbReference>
<dbReference type="InterPro" id="IPR036890">
    <property type="entry name" value="HATPase_C_sf"/>
</dbReference>
<dbReference type="InterPro" id="IPR020568">
    <property type="entry name" value="Ribosomal_Su5_D2-typ_SF"/>
</dbReference>
<dbReference type="InterPro" id="IPR014721">
    <property type="entry name" value="Ribsml_uS5_D2-typ_fold_subgr"/>
</dbReference>
<dbReference type="InterPro" id="IPR001241">
    <property type="entry name" value="Topo_IIA"/>
</dbReference>
<dbReference type="InterPro" id="IPR013760">
    <property type="entry name" value="Topo_IIA-like_dom_sf"/>
</dbReference>
<dbReference type="InterPro" id="IPR000565">
    <property type="entry name" value="Topo_IIA_B"/>
</dbReference>
<dbReference type="InterPro" id="IPR013759">
    <property type="entry name" value="Topo_IIA_B_C"/>
</dbReference>
<dbReference type="InterPro" id="IPR013506">
    <property type="entry name" value="Topo_IIA_bsu_dom2"/>
</dbReference>
<dbReference type="InterPro" id="IPR018522">
    <property type="entry name" value="TopoIIA_CS"/>
</dbReference>
<dbReference type="InterPro" id="IPR006171">
    <property type="entry name" value="TOPRIM_dom"/>
</dbReference>
<dbReference type="InterPro" id="IPR034160">
    <property type="entry name" value="TOPRIM_GyrB"/>
</dbReference>
<dbReference type="NCBIfam" id="TIGR01059">
    <property type="entry name" value="gyrB"/>
    <property type="match status" value="1"/>
</dbReference>
<dbReference type="NCBIfam" id="NF004189">
    <property type="entry name" value="PRK05644.1"/>
    <property type="match status" value="1"/>
</dbReference>
<dbReference type="NCBIfam" id="NF011501">
    <property type="entry name" value="PRK14939.1"/>
    <property type="match status" value="1"/>
</dbReference>
<dbReference type="PANTHER" id="PTHR45866:SF1">
    <property type="entry name" value="DNA GYRASE SUBUNIT B, MITOCHONDRIAL"/>
    <property type="match status" value="1"/>
</dbReference>
<dbReference type="PANTHER" id="PTHR45866">
    <property type="entry name" value="DNA GYRASE/TOPOISOMERASE SUBUNIT B"/>
    <property type="match status" value="1"/>
</dbReference>
<dbReference type="Pfam" id="PF00204">
    <property type="entry name" value="DNA_gyraseB"/>
    <property type="match status" value="1"/>
</dbReference>
<dbReference type="Pfam" id="PF00986">
    <property type="entry name" value="DNA_gyraseB_C"/>
    <property type="match status" value="1"/>
</dbReference>
<dbReference type="Pfam" id="PF02518">
    <property type="entry name" value="HATPase_c"/>
    <property type="match status" value="1"/>
</dbReference>
<dbReference type="Pfam" id="PF01751">
    <property type="entry name" value="Toprim"/>
    <property type="match status" value="1"/>
</dbReference>
<dbReference type="PRINTS" id="PR01159">
    <property type="entry name" value="DNAGYRASEB"/>
</dbReference>
<dbReference type="PRINTS" id="PR00418">
    <property type="entry name" value="TPI2FAMILY"/>
</dbReference>
<dbReference type="SMART" id="SM00387">
    <property type="entry name" value="HATPase_c"/>
    <property type="match status" value="1"/>
</dbReference>
<dbReference type="SMART" id="SM00433">
    <property type="entry name" value="TOP2c"/>
    <property type="match status" value="1"/>
</dbReference>
<dbReference type="SUPFAM" id="SSF55874">
    <property type="entry name" value="ATPase domain of HSP90 chaperone/DNA topoisomerase II/histidine kinase"/>
    <property type="match status" value="1"/>
</dbReference>
<dbReference type="SUPFAM" id="SSF54211">
    <property type="entry name" value="Ribosomal protein S5 domain 2-like"/>
    <property type="match status" value="1"/>
</dbReference>
<dbReference type="SUPFAM" id="SSF56719">
    <property type="entry name" value="Type II DNA topoisomerase"/>
    <property type="match status" value="1"/>
</dbReference>
<dbReference type="PROSITE" id="PS00177">
    <property type="entry name" value="TOPOISOMERASE_II"/>
    <property type="match status" value="1"/>
</dbReference>
<dbReference type="PROSITE" id="PS50880">
    <property type="entry name" value="TOPRIM"/>
    <property type="match status" value="1"/>
</dbReference>
<proteinExistence type="evidence at protein level"/>
<reference key="1">
    <citation type="submission" date="1999-07" db="EMBL/GenBank/DDBJ databases">
        <title>The Thermus thermophilus gyrase: cloning, expression and activity of the gyrase A and gyrase B subunits.</title>
        <authorList>
            <person name="Hoermann L."/>
            <person name="Bronner C."/>
            <person name="Forster A."/>
            <person name="Mousli M."/>
            <person name="Lutz Y."/>
            <person name="Oudet P."/>
            <person name="Jeltsch J.M."/>
        </authorList>
    </citation>
    <scope>NUCLEOTIDE SEQUENCE [GENOMIC DNA]</scope>
    <source>
        <strain>ATCC 27634 / DSM 579 / HB8</strain>
    </source>
</reference>
<reference key="2">
    <citation type="submission" date="2004-11" db="EMBL/GenBank/DDBJ databases">
        <title>Complete genome sequence of Thermus thermophilus HB8.</title>
        <authorList>
            <person name="Masui R."/>
            <person name="Kurokawa K."/>
            <person name="Nakagawa N."/>
            <person name="Tokunaga F."/>
            <person name="Koyama Y."/>
            <person name="Shibata T."/>
            <person name="Oshima T."/>
            <person name="Yokoyama S."/>
            <person name="Yasunaga T."/>
            <person name="Kuramitsu S."/>
        </authorList>
    </citation>
    <scope>NUCLEOTIDE SEQUENCE [LARGE SCALE GENOMIC DNA]</scope>
    <source>
        <strain>ATCC 27634 / DSM 579 / HB8</strain>
    </source>
</reference>
<reference key="3">
    <citation type="journal article" date="2002" name="J. Biol. Chem.">
        <title>An open conformation of the Thermus thermophilus gyrase B ATP-binding domain.</title>
        <authorList>
            <person name="Lamour V."/>
            <person name="Hoermann L."/>
            <person name="Jeltsch J.M."/>
            <person name="Oudet P."/>
            <person name="Moras D."/>
        </authorList>
    </citation>
    <scope>X-RAY CRYSTALLOGRAPHY (2.30 ANGSTROMS) OF 1-390 IN COMPLEX WITH NOVOBIOCIN</scope>
    <scope>FUNCTION</scope>
    <scope>BIOPHYSICOCHEMICAL PROPERTIES</scope>
    <scope>SUBUNIT</scope>
    <scope>DOMAIN</scope>
</reference>
<reference key="4">
    <citation type="journal article" date="2013" name="Nucleic Acids Res.">
        <title>Structural insight into negative DNA supercoiling by DNA gyrase, a bacterial type 2A DNA topoisomerase.</title>
        <authorList>
            <person name="Papillon J."/>
            <person name="Menetret J.F."/>
            <person name="Batisse C."/>
            <person name="Helye R."/>
            <person name="Schultz P."/>
            <person name="Potier N."/>
            <person name="Lamour V."/>
        </authorList>
    </citation>
    <scope>FUNCTION</scope>
    <scope>STRUCTURE BY ELECTRON MICROSCOPY (16.8 ANGSTROMS)</scope>
    <scope>STRUCTURE BY ELECTRON MICROSCOPY (23 ANGSTROMS) IN COMPLEX WITH DNA AND CIPROFOXACIN</scope>
    <scope>BIOPHYSICOCHEMICAL PROPERTIES</scope>
    <scope>SUBUNIT</scope>
    <scope>DOMAIN</scope>
    <scope>DNA-BINDING</scope>
    <source>
        <strain>ATCC 27634 / DSM 579 / HB8</strain>
    </source>
</reference>
<gene>
    <name evidence="1" type="primary">gyrB</name>
    <name type="ordered locus">TTHA1586</name>
</gene>
<comment type="function">
    <text evidence="3">A type II topoisomerase that negatively supercoils closed circular double-stranded (ds) DNA in an ATP-dependent manner (PubMed:11850422, PubMed:23804759). It probably also catalyzes the interconversion of other topological isomers of double-stranded DNA rings, including catenanes (PubMed:11850422). Relaxes negatively supercoiled DNA in an ATP-independent manner (PubMed:11850422, PubMed:23804759). At comparable concentrations T.thermophilus gyrase does not introduce as many negative supercoils into DNA as the E.coli enzyme (PubMed:23804759).</text>
</comment>
<comment type="function">
    <text>Negative supercoiling favors strand separation, and DNA replication, transcription, recombination and repair, all of which involve strand separation. Type II topoisomerases break and join 2 DNA strands simultaneously in an ATP-dependent manner.</text>
</comment>
<comment type="catalytic activity">
    <reaction evidence="1">
        <text>ATP-dependent breakage, passage and rejoining of double-stranded DNA.</text>
        <dbReference type="EC" id="5.6.2.2"/>
    </reaction>
</comment>
<comment type="cofactor">
    <cofactor evidence="1">
        <name>Mg(2+)</name>
        <dbReference type="ChEBI" id="CHEBI:18420"/>
    </cofactor>
    <cofactor evidence="1">
        <name>Mn(2+)</name>
        <dbReference type="ChEBI" id="CHEBI:29035"/>
    </cofactor>
    <cofactor evidence="1">
        <name>Ca(2+)</name>
        <dbReference type="ChEBI" id="CHEBI:29108"/>
    </cofactor>
    <text evidence="1">Binds two Mg(2+) per subunit. The magnesium ions form salt bridges with both the protein and the DNA. Can also accept other divalent metal cations, such as Mn(2+) or Ca(2+).</text>
</comment>
<comment type="biophysicochemical properties">
    <temperatureDependence>
        <text evidence="2 3">Optimum temperature is 65 degrees Celsius (PubMed:11850422, PubMed:23804759). Active between 25 and 77 degrees Celsius (PubMed:11850422).</text>
    </temperatureDependence>
</comment>
<comment type="subunit">
    <text evidence="2 6">Heterotetramer, composed of two GyrA and two GyrB chains (PubMed:23804759). Non-hydrolyzable ATP analogs induce dimerization, novobiocin also induces a small amount of dimerization (PubMed:11850422). The two subunits form an intertwined dimer where the GyrB ATPase transducer helix of 1 subunit connects to the Toprim domain of the other GyrB subunit through a 10 residue linker (PubMed:23804759). In the heterotetramer, GyrA contains the active site tyrosine that forms a covalent intermediate with the DNA, while GyrB binds cofactors and catalyzes ATP hydrolysis.</text>
</comment>
<comment type="subcellular location">
    <subcellularLocation>
        <location evidence="1">Cytoplasm</location>
    </subcellularLocation>
</comment>
<comment type="domain">
    <text evidence="3 5">Consists of 3 domains; the ATPase domain (residues 1-220), the transducer domain (221-390) and the toprim domain (391-634) (PubMed:11850422). Removal of the N-terminal ATPase domain (residues 2-392) increases ATP-independent DNA relaxation, showing it is not required for DNA binding or cleavage, this enzyme still has some supercoiling activity, but in this case it introduces positive supercoils (PubMed:23804759).</text>
</comment>
<comment type="miscellaneous">
    <text evidence="3">For the electron microscopy studies a GyrB-GyrA fusion protein was made with a Gly-Asp-Leu linker between the 2 subunits. It forms the expected dimer (PubMed:23804759).</text>
</comment>
<comment type="miscellaneous">
    <text evidence="1">Few gyrases are as efficient as E.coli at forming negative supercoils. Not all organisms have 2 type II topoisomerases; in organisms with a single type II topoisomerase this enzyme also has to decatenate newly replicated chromosomes.</text>
</comment>
<comment type="similarity">
    <text evidence="1">Belongs to the type II topoisomerase GyrB family.</text>
</comment>
<organism>
    <name type="scientific">Thermus thermophilus (strain ATCC 27634 / DSM 579 / HB8)</name>
    <dbReference type="NCBI Taxonomy" id="300852"/>
    <lineage>
        <taxon>Bacteria</taxon>
        <taxon>Thermotogati</taxon>
        <taxon>Deinococcota</taxon>
        <taxon>Deinococci</taxon>
        <taxon>Thermales</taxon>
        <taxon>Thermaceae</taxon>
        <taxon>Thermus</taxon>
    </lineage>
</organism>
<evidence type="ECO:0000255" key="1">
    <source>
        <dbReference type="HAMAP-Rule" id="MF_01898"/>
    </source>
</evidence>
<evidence type="ECO:0000269" key="2">
    <source>
    </source>
</evidence>
<evidence type="ECO:0000269" key="3">
    <source>
    </source>
</evidence>
<evidence type="ECO:0000305" key="4"/>
<evidence type="ECO:0000305" key="5">
    <source>
    </source>
</evidence>
<evidence type="ECO:0000305" key="6">
    <source>
    </source>
</evidence>
<evidence type="ECO:0007829" key="7">
    <source>
        <dbReference type="PDB" id="1KIJ"/>
    </source>
</evidence>
<evidence type="ECO:0007829" key="8">
    <source>
        <dbReference type="PDB" id="6ENH"/>
    </source>
</evidence>
<keyword id="KW-0002">3D-structure</keyword>
<keyword id="KW-0067">ATP-binding</keyword>
<keyword id="KW-0963">Cytoplasm</keyword>
<keyword id="KW-0238">DNA-binding</keyword>
<keyword id="KW-0413">Isomerase</keyword>
<keyword id="KW-0460">Magnesium</keyword>
<keyword id="KW-0479">Metal-binding</keyword>
<keyword id="KW-0547">Nucleotide-binding</keyword>
<keyword id="KW-1185">Reference proteome</keyword>
<keyword id="KW-0799">Topoisomerase</keyword>
<feature type="chain" id="PRO_0000435543" description="DNA gyrase subunit B">
    <location>
        <begin position="1"/>
        <end position="634"/>
    </location>
</feature>
<feature type="domain" description="Toprim" evidence="1">
    <location>
        <begin position="416"/>
        <end position="534"/>
    </location>
</feature>
<feature type="region of interest" description="ATPase domain" evidence="5">
    <location>
        <begin position="1"/>
        <end position="220"/>
    </location>
</feature>
<feature type="region of interest" description="Transducer domain" evidence="5">
    <location>
        <begin position="221"/>
        <end position="390"/>
    </location>
</feature>
<feature type="binding site" evidence="1">
    <location>
        <position position="422"/>
    </location>
    <ligand>
        <name>Mg(2+)</name>
        <dbReference type="ChEBI" id="CHEBI:18420"/>
        <label>1</label>
        <note>catalytic</note>
    </ligand>
</feature>
<feature type="binding site" evidence="1">
    <location>
        <position position="499"/>
    </location>
    <ligand>
        <name>Mg(2+)</name>
        <dbReference type="ChEBI" id="CHEBI:18420"/>
        <label>1</label>
        <note>catalytic</note>
    </ligand>
</feature>
<feature type="binding site" evidence="1">
    <location>
        <position position="499"/>
    </location>
    <ligand>
        <name>Mg(2+)</name>
        <dbReference type="ChEBI" id="CHEBI:18420"/>
        <label>2</label>
    </ligand>
</feature>
<feature type="binding site" evidence="1">
    <location>
        <position position="501"/>
    </location>
    <ligand>
        <name>Mg(2+)</name>
        <dbReference type="ChEBI" id="CHEBI:18420"/>
        <label>2</label>
    </ligand>
</feature>
<feature type="site" description="Interaction with DNA" evidence="1">
    <location>
        <position position="447"/>
    </location>
</feature>
<feature type="site" description="Interaction with DNA" evidence="1">
    <location>
        <position position="450"/>
    </location>
</feature>
<feature type="sequence conflict" description="In Ref. 1; AAF89615." evidence="4" ref="1">
    <original>T</original>
    <variation>N</variation>
    <location>
        <position position="93"/>
    </location>
</feature>
<feature type="sequence conflict" description="In Ref. 1; AAF89615." evidence="4" ref="1">
    <original>GI</original>
    <variation>AV</variation>
    <location>
        <begin position="475"/>
        <end position="476"/>
    </location>
</feature>
<feature type="helix" evidence="8">
    <location>
        <begin position="8"/>
        <end position="11"/>
    </location>
</feature>
<feature type="helix" evidence="8">
    <location>
        <begin position="14"/>
        <end position="19"/>
    </location>
</feature>
<feature type="helix" evidence="8">
    <location>
        <begin position="22"/>
        <end position="25"/>
    </location>
</feature>
<feature type="helix" evidence="8">
    <location>
        <begin position="30"/>
        <end position="49"/>
    </location>
</feature>
<feature type="strand" evidence="8">
    <location>
        <begin position="55"/>
        <end position="60"/>
    </location>
</feature>
<feature type="strand" evidence="8">
    <location>
        <begin position="66"/>
        <end position="73"/>
    </location>
</feature>
<feature type="strand" evidence="8">
    <location>
        <begin position="78"/>
        <end position="80"/>
    </location>
</feature>
<feature type="turn" evidence="8">
    <location>
        <begin position="81"/>
        <end position="84"/>
    </location>
</feature>
<feature type="helix" evidence="8">
    <location>
        <begin position="87"/>
        <end position="93"/>
    </location>
</feature>
<feature type="strand" evidence="7">
    <location>
        <begin position="97"/>
        <end position="99"/>
    </location>
</feature>
<feature type="helix" evidence="7">
    <location>
        <begin position="100"/>
        <end position="103"/>
    </location>
</feature>
<feature type="helix" evidence="8">
    <location>
        <begin position="115"/>
        <end position="122"/>
    </location>
</feature>
<feature type="strand" evidence="8">
    <location>
        <begin position="124"/>
        <end position="133"/>
    </location>
</feature>
<feature type="strand" evidence="8">
    <location>
        <begin position="136"/>
        <end position="143"/>
    </location>
</feature>
<feature type="strand" evidence="8">
    <location>
        <begin position="146"/>
        <end position="156"/>
    </location>
</feature>
<feature type="helix" evidence="7">
    <location>
        <begin position="158"/>
        <end position="160"/>
    </location>
</feature>
<feature type="strand" evidence="8">
    <location>
        <begin position="163"/>
        <end position="170"/>
    </location>
</feature>
<feature type="helix" evidence="8">
    <location>
        <begin position="172"/>
        <end position="175"/>
    </location>
</feature>
<feature type="helix" evidence="8">
    <location>
        <begin position="182"/>
        <end position="195"/>
    </location>
</feature>
<feature type="turn" evidence="7">
    <location>
        <begin position="196"/>
        <end position="198"/>
    </location>
</feature>
<feature type="strand" evidence="8">
    <location>
        <begin position="200"/>
        <end position="205"/>
    </location>
</feature>
<feature type="turn" evidence="8">
    <location>
        <begin position="206"/>
        <end position="208"/>
    </location>
</feature>
<feature type="strand" evidence="8">
    <location>
        <begin position="211"/>
        <end position="214"/>
    </location>
</feature>
<feature type="helix" evidence="8">
    <location>
        <begin position="219"/>
        <end position="227"/>
    </location>
</feature>
<feature type="turn" evidence="8">
    <location>
        <begin position="228"/>
        <end position="230"/>
    </location>
</feature>
<feature type="strand" evidence="8">
    <location>
        <begin position="239"/>
        <end position="245"/>
    </location>
</feature>
<feature type="strand" evidence="8">
    <location>
        <begin position="248"/>
        <end position="260"/>
    </location>
</feature>
<feature type="strand" evidence="8">
    <location>
        <begin position="263"/>
        <end position="268"/>
    </location>
</feature>
<feature type="helix" evidence="8">
    <location>
        <begin position="278"/>
        <end position="297"/>
    </location>
</feature>
<feature type="strand" evidence="8">
    <location>
        <begin position="303"/>
        <end position="305"/>
    </location>
</feature>
<feature type="helix" evidence="8">
    <location>
        <begin position="311"/>
        <end position="314"/>
    </location>
</feature>
<feature type="strand" evidence="8">
    <location>
        <begin position="317"/>
        <end position="324"/>
    </location>
</feature>
<feature type="helix" evidence="8">
    <location>
        <begin position="341"/>
        <end position="361"/>
    </location>
</feature>
<feature type="helix" evidence="8">
    <location>
        <begin position="363"/>
        <end position="389"/>
    </location>
</feature>
<name>GYRB_THET8</name>
<accession>Q5SHZ4</accession>
<accession>Q9LCX5</accession>